<feature type="chain" id="PRO_1000077834" description="UvrABC system protein C">
    <location>
        <begin position="1"/>
        <end position="609"/>
    </location>
</feature>
<feature type="domain" description="GIY-YIG" evidence="1">
    <location>
        <begin position="16"/>
        <end position="94"/>
    </location>
</feature>
<feature type="domain" description="UVR" evidence="1">
    <location>
        <begin position="203"/>
        <end position="238"/>
    </location>
</feature>
<accession>A3D5P1</accession>
<organism>
    <name type="scientific">Shewanella baltica (strain OS155 / ATCC BAA-1091)</name>
    <dbReference type="NCBI Taxonomy" id="325240"/>
    <lineage>
        <taxon>Bacteria</taxon>
        <taxon>Pseudomonadati</taxon>
        <taxon>Pseudomonadota</taxon>
        <taxon>Gammaproteobacteria</taxon>
        <taxon>Alteromonadales</taxon>
        <taxon>Shewanellaceae</taxon>
        <taxon>Shewanella</taxon>
    </lineage>
</organism>
<keyword id="KW-0963">Cytoplasm</keyword>
<keyword id="KW-0227">DNA damage</keyword>
<keyword id="KW-0228">DNA excision</keyword>
<keyword id="KW-0234">DNA repair</keyword>
<keyword id="KW-0267">Excision nuclease</keyword>
<keyword id="KW-1185">Reference proteome</keyword>
<keyword id="KW-0742">SOS response</keyword>
<reference key="1">
    <citation type="submission" date="2007-02" db="EMBL/GenBank/DDBJ databases">
        <title>Complete sequence of chromosome of Shewanella baltica OS155.</title>
        <authorList>
            <consortium name="US DOE Joint Genome Institute"/>
            <person name="Copeland A."/>
            <person name="Lucas S."/>
            <person name="Lapidus A."/>
            <person name="Barry K."/>
            <person name="Detter J.C."/>
            <person name="Glavina del Rio T."/>
            <person name="Hammon N."/>
            <person name="Israni S."/>
            <person name="Dalin E."/>
            <person name="Tice H."/>
            <person name="Pitluck S."/>
            <person name="Sims D.R."/>
            <person name="Brettin T."/>
            <person name="Bruce D."/>
            <person name="Han C."/>
            <person name="Tapia R."/>
            <person name="Brainard J."/>
            <person name="Schmutz J."/>
            <person name="Larimer F."/>
            <person name="Land M."/>
            <person name="Hauser L."/>
            <person name="Kyrpides N."/>
            <person name="Mikhailova N."/>
            <person name="Brettar I."/>
            <person name="Klappenbach J."/>
            <person name="Konstantinidis K."/>
            <person name="Rodrigues J."/>
            <person name="Tiedje J."/>
            <person name="Richardson P."/>
        </authorList>
    </citation>
    <scope>NUCLEOTIDE SEQUENCE [LARGE SCALE GENOMIC DNA]</scope>
    <source>
        <strain>OS155 / ATCC BAA-1091</strain>
    </source>
</reference>
<evidence type="ECO:0000255" key="1">
    <source>
        <dbReference type="HAMAP-Rule" id="MF_00203"/>
    </source>
</evidence>
<dbReference type="EMBL" id="CP000563">
    <property type="protein sequence ID" value="ABN62054.1"/>
    <property type="molecule type" value="Genomic_DNA"/>
</dbReference>
<dbReference type="RefSeq" id="WP_011847052.1">
    <property type="nucleotide sequence ID" value="NC_009052.1"/>
</dbReference>
<dbReference type="SMR" id="A3D5P1"/>
<dbReference type="STRING" id="325240.Sbal_2561"/>
<dbReference type="KEGG" id="sbl:Sbal_2561"/>
<dbReference type="HOGENOM" id="CLU_014841_3_0_6"/>
<dbReference type="OrthoDB" id="9804933at2"/>
<dbReference type="Proteomes" id="UP000001557">
    <property type="component" value="Chromosome"/>
</dbReference>
<dbReference type="GO" id="GO:0005737">
    <property type="term" value="C:cytoplasm"/>
    <property type="evidence" value="ECO:0007669"/>
    <property type="project" value="UniProtKB-SubCell"/>
</dbReference>
<dbReference type="GO" id="GO:0009380">
    <property type="term" value="C:excinuclease repair complex"/>
    <property type="evidence" value="ECO:0007669"/>
    <property type="project" value="InterPro"/>
</dbReference>
<dbReference type="GO" id="GO:0003677">
    <property type="term" value="F:DNA binding"/>
    <property type="evidence" value="ECO:0007669"/>
    <property type="project" value="UniProtKB-UniRule"/>
</dbReference>
<dbReference type="GO" id="GO:0009381">
    <property type="term" value="F:excinuclease ABC activity"/>
    <property type="evidence" value="ECO:0007669"/>
    <property type="project" value="UniProtKB-UniRule"/>
</dbReference>
<dbReference type="GO" id="GO:0006289">
    <property type="term" value="P:nucleotide-excision repair"/>
    <property type="evidence" value="ECO:0007669"/>
    <property type="project" value="UniProtKB-UniRule"/>
</dbReference>
<dbReference type="GO" id="GO:0009432">
    <property type="term" value="P:SOS response"/>
    <property type="evidence" value="ECO:0007669"/>
    <property type="project" value="UniProtKB-UniRule"/>
</dbReference>
<dbReference type="CDD" id="cd10434">
    <property type="entry name" value="GIY-YIG_UvrC_Cho"/>
    <property type="match status" value="1"/>
</dbReference>
<dbReference type="FunFam" id="1.10.150.20:FF:000005">
    <property type="entry name" value="UvrABC system protein C"/>
    <property type="match status" value="1"/>
</dbReference>
<dbReference type="FunFam" id="3.30.420.340:FF:000001">
    <property type="entry name" value="UvrABC system protein C"/>
    <property type="match status" value="1"/>
</dbReference>
<dbReference type="FunFam" id="3.40.1440.10:FF:000001">
    <property type="entry name" value="UvrABC system protein C"/>
    <property type="match status" value="1"/>
</dbReference>
<dbReference type="Gene3D" id="1.10.150.20">
    <property type="entry name" value="5' to 3' exonuclease, C-terminal subdomain"/>
    <property type="match status" value="1"/>
</dbReference>
<dbReference type="Gene3D" id="3.40.1440.10">
    <property type="entry name" value="GIY-YIG endonuclease"/>
    <property type="match status" value="1"/>
</dbReference>
<dbReference type="Gene3D" id="4.10.860.10">
    <property type="entry name" value="UVR domain"/>
    <property type="match status" value="1"/>
</dbReference>
<dbReference type="Gene3D" id="3.30.420.340">
    <property type="entry name" value="UvrC, RNAse H endonuclease domain"/>
    <property type="match status" value="1"/>
</dbReference>
<dbReference type="HAMAP" id="MF_00203">
    <property type="entry name" value="UvrC"/>
    <property type="match status" value="1"/>
</dbReference>
<dbReference type="InterPro" id="IPR000305">
    <property type="entry name" value="GIY-YIG_endonuc"/>
</dbReference>
<dbReference type="InterPro" id="IPR035901">
    <property type="entry name" value="GIY-YIG_endonuc_sf"/>
</dbReference>
<dbReference type="InterPro" id="IPR047296">
    <property type="entry name" value="GIY-YIG_UvrC_Cho"/>
</dbReference>
<dbReference type="InterPro" id="IPR003583">
    <property type="entry name" value="Hlx-hairpin-Hlx_DNA-bd_motif"/>
</dbReference>
<dbReference type="InterPro" id="IPR010994">
    <property type="entry name" value="RuvA_2-like"/>
</dbReference>
<dbReference type="InterPro" id="IPR001943">
    <property type="entry name" value="UVR_dom"/>
</dbReference>
<dbReference type="InterPro" id="IPR036876">
    <property type="entry name" value="UVR_dom_sf"/>
</dbReference>
<dbReference type="InterPro" id="IPR050066">
    <property type="entry name" value="UvrABC_protein_C"/>
</dbReference>
<dbReference type="InterPro" id="IPR004791">
    <property type="entry name" value="UvrC"/>
</dbReference>
<dbReference type="InterPro" id="IPR001162">
    <property type="entry name" value="UvrC_RNase_H_dom"/>
</dbReference>
<dbReference type="InterPro" id="IPR038476">
    <property type="entry name" value="UvrC_RNase_H_dom_sf"/>
</dbReference>
<dbReference type="NCBIfam" id="TIGR00194">
    <property type="entry name" value="uvrC"/>
    <property type="match status" value="1"/>
</dbReference>
<dbReference type="PANTHER" id="PTHR30562:SF1">
    <property type="entry name" value="UVRABC SYSTEM PROTEIN C"/>
    <property type="match status" value="1"/>
</dbReference>
<dbReference type="PANTHER" id="PTHR30562">
    <property type="entry name" value="UVRC/OXIDOREDUCTASE"/>
    <property type="match status" value="1"/>
</dbReference>
<dbReference type="Pfam" id="PF01541">
    <property type="entry name" value="GIY-YIG"/>
    <property type="match status" value="1"/>
</dbReference>
<dbReference type="Pfam" id="PF14520">
    <property type="entry name" value="HHH_5"/>
    <property type="match status" value="1"/>
</dbReference>
<dbReference type="Pfam" id="PF02151">
    <property type="entry name" value="UVR"/>
    <property type="match status" value="1"/>
</dbReference>
<dbReference type="Pfam" id="PF22920">
    <property type="entry name" value="UvrC_RNaseH"/>
    <property type="match status" value="1"/>
</dbReference>
<dbReference type="Pfam" id="PF08459">
    <property type="entry name" value="UvrC_RNaseH_dom"/>
    <property type="match status" value="1"/>
</dbReference>
<dbReference type="SMART" id="SM00465">
    <property type="entry name" value="GIYc"/>
    <property type="match status" value="1"/>
</dbReference>
<dbReference type="SMART" id="SM00278">
    <property type="entry name" value="HhH1"/>
    <property type="match status" value="2"/>
</dbReference>
<dbReference type="SUPFAM" id="SSF46600">
    <property type="entry name" value="C-terminal UvrC-binding domain of UvrB"/>
    <property type="match status" value="1"/>
</dbReference>
<dbReference type="SUPFAM" id="SSF82771">
    <property type="entry name" value="GIY-YIG endonuclease"/>
    <property type="match status" value="1"/>
</dbReference>
<dbReference type="SUPFAM" id="SSF47781">
    <property type="entry name" value="RuvA domain 2-like"/>
    <property type="match status" value="1"/>
</dbReference>
<dbReference type="PROSITE" id="PS50164">
    <property type="entry name" value="GIY_YIG"/>
    <property type="match status" value="1"/>
</dbReference>
<dbReference type="PROSITE" id="PS50151">
    <property type="entry name" value="UVR"/>
    <property type="match status" value="1"/>
</dbReference>
<dbReference type="PROSITE" id="PS50165">
    <property type="entry name" value="UVRC"/>
    <property type="match status" value="1"/>
</dbReference>
<comment type="function">
    <text evidence="1">The UvrABC repair system catalyzes the recognition and processing of DNA lesions. UvrC both incises the 5' and 3' sides of the lesion. The N-terminal half is responsible for the 3' incision and the C-terminal half is responsible for the 5' incision.</text>
</comment>
<comment type="subunit">
    <text evidence="1">Interacts with UvrB in an incision complex.</text>
</comment>
<comment type="subcellular location">
    <subcellularLocation>
        <location evidence="1">Cytoplasm</location>
    </subcellularLocation>
</comment>
<comment type="similarity">
    <text evidence="1">Belongs to the UvrC family.</text>
</comment>
<proteinExistence type="inferred from homology"/>
<gene>
    <name evidence="1" type="primary">uvrC</name>
    <name type="ordered locus">Sbal_2561</name>
</gene>
<protein>
    <recommendedName>
        <fullName evidence="1">UvrABC system protein C</fullName>
        <shortName evidence="1">Protein UvrC</shortName>
    </recommendedName>
    <alternativeName>
        <fullName evidence="1">Excinuclease ABC subunit C</fullName>
    </alternativeName>
</protein>
<sequence>MSNEFNAQSFLRTVSSSAGVYRMYDVKNDVIYVGKAKDLKKRLTSYFRKNLANVKTQALVSHIHHINVTLTHSETDALLLENDYIKQYMPKYNVLLRDDKSYPYILLSQHEHPRLAYHRGPQREKGHYFGPYPNGGAVRESLHLMQKLFPIRQCDDLYYKSRSRPCLQYQLSRCSAPCVGKVSNADYDEQVKLASLFLKGKDQQVISALVDKMELAAERQAYEQAARFRDQIMALRKVAEQQEVSNNKGDMDVIGVHYSSGIACFHLLFIREGKIFGSRSYYPSVPAQTDMDEVLRSFILQFYLNADIQRTIPKEVVISHNFEELHELEAAVSEALDKKFSIKTNVRADRASFLRLAVTNATNAVVTRLSHKNTVEQRFVLLEEILELSTPIQRMECFDISHTMGESTVASCVVFNREGPHKGEYRRYNIEGITPGDDYAAMKQAVSRRFDKIEAGGKIPDILFIDGGLGQLRIAQKIVDEKFVHLDKAPQLIGVAKGEGRKPGLETLILGDTETSFSLEGDSPALHLIQHIRDESHRFAIAGHRNRRQKTRNTSTLESIPGIGPKRRKALLQHLGGLQEVKGASVAELVKVPGISIEMAQTIHDALRG</sequence>
<name>UVRC_SHEB5</name>